<gene>
    <name evidence="1" type="primary">glyA</name>
    <name type="ordered locus">Hlac_2034</name>
</gene>
<dbReference type="EC" id="2.1.2.1" evidence="1"/>
<dbReference type="EMBL" id="CP001365">
    <property type="protein sequence ID" value="ACM57612.1"/>
    <property type="molecule type" value="Genomic_DNA"/>
</dbReference>
<dbReference type="RefSeq" id="WP_015910737.1">
    <property type="nucleotide sequence ID" value="NC_012029.1"/>
</dbReference>
<dbReference type="SMR" id="B9LQJ1"/>
<dbReference type="GeneID" id="7402053"/>
<dbReference type="KEGG" id="hla:Hlac_2034"/>
<dbReference type="eggNOG" id="arCOG00070">
    <property type="taxonomic scope" value="Archaea"/>
</dbReference>
<dbReference type="HOGENOM" id="CLU_022477_2_1_2"/>
<dbReference type="UniPathway" id="UPA00193"/>
<dbReference type="UniPathway" id="UPA00288">
    <property type="reaction ID" value="UER01023"/>
</dbReference>
<dbReference type="Proteomes" id="UP000000740">
    <property type="component" value="Chromosome 1"/>
</dbReference>
<dbReference type="GO" id="GO:0005737">
    <property type="term" value="C:cytoplasm"/>
    <property type="evidence" value="ECO:0007669"/>
    <property type="project" value="UniProtKB-SubCell"/>
</dbReference>
<dbReference type="GO" id="GO:0004372">
    <property type="term" value="F:glycine hydroxymethyltransferase activity"/>
    <property type="evidence" value="ECO:0007669"/>
    <property type="project" value="UniProtKB-UniRule"/>
</dbReference>
<dbReference type="GO" id="GO:0030170">
    <property type="term" value="F:pyridoxal phosphate binding"/>
    <property type="evidence" value="ECO:0007669"/>
    <property type="project" value="UniProtKB-UniRule"/>
</dbReference>
<dbReference type="GO" id="GO:0019264">
    <property type="term" value="P:glycine biosynthetic process from serine"/>
    <property type="evidence" value="ECO:0007669"/>
    <property type="project" value="UniProtKB-UniRule"/>
</dbReference>
<dbReference type="GO" id="GO:0035999">
    <property type="term" value="P:tetrahydrofolate interconversion"/>
    <property type="evidence" value="ECO:0007669"/>
    <property type="project" value="UniProtKB-UniRule"/>
</dbReference>
<dbReference type="CDD" id="cd00378">
    <property type="entry name" value="SHMT"/>
    <property type="match status" value="1"/>
</dbReference>
<dbReference type="FunFam" id="3.40.640.10:FF:000001">
    <property type="entry name" value="Serine hydroxymethyltransferase"/>
    <property type="match status" value="1"/>
</dbReference>
<dbReference type="Gene3D" id="3.90.1150.10">
    <property type="entry name" value="Aspartate Aminotransferase, domain 1"/>
    <property type="match status" value="1"/>
</dbReference>
<dbReference type="Gene3D" id="3.40.640.10">
    <property type="entry name" value="Type I PLP-dependent aspartate aminotransferase-like (Major domain)"/>
    <property type="match status" value="1"/>
</dbReference>
<dbReference type="HAMAP" id="MF_00051">
    <property type="entry name" value="SHMT"/>
    <property type="match status" value="1"/>
</dbReference>
<dbReference type="InterPro" id="IPR015424">
    <property type="entry name" value="PyrdxlP-dep_Trfase"/>
</dbReference>
<dbReference type="InterPro" id="IPR015421">
    <property type="entry name" value="PyrdxlP-dep_Trfase_major"/>
</dbReference>
<dbReference type="InterPro" id="IPR015422">
    <property type="entry name" value="PyrdxlP-dep_Trfase_small"/>
</dbReference>
<dbReference type="InterPro" id="IPR001085">
    <property type="entry name" value="Ser_HO-MeTrfase"/>
</dbReference>
<dbReference type="InterPro" id="IPR049943">
    <property type="entry name" value="Ser_HO-MeTrfase-like"/>
</dbReference>
<dbReference type="InterPro" id="IPR019798">
    <property type="entry name" value="Ser_HO-MeTrfase_PLP_BS"/>
</dbReference>
<dbReference type="InterPro" id="IPR039429">
    <property type="entry name" value="SHMT-like_dom"/>
</dbReference>
<dbReference type="NCBIfam" id="NF000586">
    <property type="entry name" value="PRK00011.1"/>
    <property type="match status" value="1"/>
</dbReference>
<dbReference type="PANTHER" id="PTHR11680">
    <property type="entry name" value="SERINE HYDROXYMETHYLTRANSFERASE"/>
    <property type="match status" value="1"/>
</dbReference>
<dbReference type="PANTHER" id="PTHR11680:SF35">
    <property type="entry name" value="SERINE HYDROXYMETHYLTRANSFERASE 1"/>
    <property type="match status" value="1"/>
</dbReference>
<dbReference type="Pfam" id="PF00464">
    <property type="entry name" value="SHMT"/>
    <property type="match status" value="1"/>
</dbReference>
<dbReference type="PIRSF" id="PIRSF000412">
    <property type="entry name" value="SHMT"/>
    <property type="match status" value="1"/>
</dbReference>
<dbReference type="SUPFAM" id="SSF53383">
    <property type="entry name" value="PLP-dependent transferases"/>
    <property type="match status" value="1"/>
</dbReference>
<dbReference type="PROSITE" id="PS00096">
    <property type="entry name" value="SHMT"/>
    <property type="match status" value="1"/>
</dbReference>
<name>GLYA_HALLT</name>
<evidence type="ECO:0000255" key="1">
    <source>
        <dbReference type="HAMAP-Rule" id="MF_00051"/>
    </source>
</evidence>
<organism>
    <name type="scientific">Halorubrum lacusprofundi (strain ATCC 49239 / DSM 5036 / JCM 8891 / ACAM 34)</name>
    <dbReference type="NCBI Taxonomy" id="416348"/>
    <lineage>
        <taxon>Archaea</taxon>
        <taxon>Methanobacteriati</taxon>
        <taxon>Methanobacteriota</taxon>
        <taxon>Stenosarchaea group</taxon>
        <taxon>Halobacteria</taxon>
        <taxon>Halobacteriales</taxon>
        <taxon>Haloferacaceae</taxon>
        <taxon>Halorubrum</taxon>
    </lineage>
</organism>
<feature type="chain" id="PRO_1000117639" description="Serine hydroxymethyltransferase">
    <location>
        <begin position="1"/>
        <end position="415"/>
    </location>
</feature>
<feature type="binding site" evidence="1">
    <location>
        <position position="119"/>
    </location>
    <ligand>
        <name>(6S)-5,6,7,8-tetrahydrofolate</name>
        <dbReference type="ChEBI" id="CHEBI:57453"/>
    </ligand>
</feature>
<feature type="binding site" evidence="1">
    <location>
        <begin position="123"/>
        <end position="125"/>
    </location>
    <ligand>
        <name>(6S)-5,6,7,8-tetrahydrofolate</name>
        <dbReference type="ChEBI" id="CHEBI:57453"/>
    </ligand>
</feature>
<feature type="binding site" evidence="1">
    <location>
        <begin position="353"/>
        <end position="355"/>
    </location>
    <ligand>
        <name>(6S)-5,6,7,8-tetrahydrofolate</name>
        <dbReference type="ChEBI" id="CHEBI:57453"/>
    </ligand>
</feature>
<feature type="site" description="Plays an important role in substrate specificity" evidence="1">
    <location>
        <position position="227"/>
    </location>
</feature>
<feature type="modified residue" description="N6-(pyridoxal phosphate)lysine" evidence="1">
    <location>
        <position position="228"/>
    </location>
</feature>
<protein>
    <recommendedName>
        <fullName evidence="1">Serine hydroxymethyltransferase</fullName>
        <shortName evidence="1">SHMT</shortName>
        <shortName evidence="1">Serine methylase</shortName>
        <ecNumber evidence="1">2.1.2.1</ecNumber>
    </recommendedName>
</protein>
<comment type="function">
    <text evidence="1">Catalyzes the reversible interconversion of serine and glycine with tetrahydrofolate (THF) serving as the one-carbon carrier. Also exhibits THF-independent aldolase activity toward beta-hydroxyamino acids, producing glycine and aldehydes, via a retro-aldol mechanism.</text>
</comment>
<comment type="catalytic activity">
    <reaction evidence="1">
        <text>(6R)-5,10-methylene-5,6,7,8-tetrahydrofolate + glycine + H2O = (6S)-5,6,7,8-tetrahydrofolate + L-serine</text>
        <dbReference type="Rhea" id="RHEA:15481"/>
        <dbReference type="ChEBI" id="CHEBI:15377"/>
        <dbReference type="ChEBI" id="CHEBI:15636"/>
        <dbReference type="ChEBI" id="CHEBI:33384"/>
        <dbReference type="ChEBI" id="CHEBI:57305"/>
        <dbReference type="ChEBI" id="CHEBI:57453"/>
        <dbReference type="EC" id="2.1.2.1"/>
    </reaction>
</comment>
<comment type="cofactor">
    <cofactor evidence="1">
        <name>pyridoxal 5'-phosphate</name>
        <dbReference type="ChEBI" id="CHEBI:597326"/>
    </cofactor>
</comment>
<comment type="pathway">
    <text evidence="1">One-carbon metabolism; tetrahydrofolate interconversion.</text>
</comment>
<comment type="pathway">
    <text evidence="1">Amino-acid biosynthesis; glycine biosynthesis; glycine from L-serine: step 1/1.</text>
</comment>
<comment type="subunit">
    <text evidence="1">Homodimer.</text>
</comment>
<comment type="subcellular location">
    <subcellularLocation>
        <location evidence="1">Cytoplasm</location>
    </subcellularLocation>
</comment>
<comment type="similarity">
    <text evidence="1">Belongs to the SHMT family.</text>
</comment>
<keyword id="KW-0028">Amino-acid biosynthesis</keyword>
<keyword id="KW-0963">Cytoplasm</keyword>
<keyword id="KW-0554">One-carbon metabolism</keyword>
<keyword id="KW-0663">Pyridoxal phosphate</keyword>
<keyword id="KW-1185">Reference proteome</keyword>
<keyword id="KW-0808">Transferase</keyword>
<accession>B9LQJ1</accession>
<sequence length="415" mass="44575">MDHEHVREVDPEVADALAGERDRQEQTLAMIASENHVSEAVLEAQGSVLTNKYAEGYPGERYYAGCEYADEVETLAIDRAKELWGADHVNVQPHSGTQANQAVYYAVLDPGDKILSLDLNHGGHLSHGHPANFTGQIYEVEQYEVDADTGYIDYEGLREAAEEFEPDIVVSGYSAYPRTVDWEEIQAAADAVDAYHLADIAHITGLVAAGVHPSPVGVADFVTGSTHKTIRAGRGGIVMCDEEFADDIDKAVFPGGQGGPLMHNIAGKAVGFKEALDPSFDEYAQNVVDNAEVLAETLQDHGFSLVSGGTDNHLVLVDLRDSHPDLPGGDAADALAAANIVLNGNTVPGETRSPFNPSGIRVGTAGVTTRGFDADVMEEVGDLIHRVVDNVDSDDVIYEVGERVVELCDEHPLYE</sequence>
<reference key="1">
    <citation type="journal article" date="2016" name="Stand. Genomic Sci.">
        <title>Complete genome sequence of the Antarctic Halorubrum lacusprofundi type strain ACAM 34.</title>
        <authorList>
            <person name="Anderson I.J."/>
            <person name="DasSarma P."/>
            <person name="Lucas S."/>
            <person name="Copeland A."/>
            <person name="Lapidus A."/>
            <person name="Del Rio T.G."/>
            <person name="Tice H."/>
            <person name="Dalin E."/>
            <person name="Bruce D.C."/>
            <person name="Goodwin L."/>
            <person name="Pitluck S."/>
            <person name="Sims D."/>
            <person name="Brettin T.S."/>
            <person name="Detter J.C."/>
            <person name="Han C.S."/>
            <person name="Larimer F."/>
            <person name="Hauser L."/>
            <person name="Land M."/>
            <person name="Ivanova N."/>
            <person name="Richardson P."/>
            <person name="Cavicchioli R."/>
            <person name="DasSarma S."/>
            <person name="Woese C.R."/>
            <person name="Kyrpides N.C."/>
        </authorList>
    </citation>
    <scope>NUCLEOTIDE SEQUENCE [LARGE SCALE GENOMIC DNA]</scope>
    <source>
        <strain>ATCC 49239 / DSM 5036 / JCM 8891 / ACAM 34</strain>
    </source>
</reference>
<proteinExistence type="inferred from homology"/>